<name>DSBD_RALN1</name>
<feature type="signal peptide" evidence="2">
    <location>
        <begin position="1"/>
        <end position="31"/>
    </location>
</feature>
<feature type="chain" id="PRO_0000007384" description="Thiol:disulfide interchange protein DsbD">
    <location>
        <begin position="32"/>
        <end position="608"/>
    </location>
</feature>
<feature type="transmembrane region" description="Helical" evidence="2">
    <location>
        <begin position="193"/>
        <end position="215"/>
    </location>
</feature>
<feature type="transmembrane region" description="Helical" evidence="2">
    <location>
        <begin position="227"/>
        <end position="249"/>
    </location>
</feature>
<feature type="transmembrane region" description="Helical" evidence="2">
    <location>
        <begin position="259"/>
        <end position="281"/>
    </location>
</feature>
<feature type="transmembrane region" description="Helical" evidence="2">
    <location>
        <begin position="302"/>
        <end position="324"/>
    </location>
</feature>
<feature type="transmembrane region" description="Helical" evidence="2">
    <location>
        <begin position="344"/>
        <end position="366"/>
    </location>
</feature>
<feature type="transmembrane region" description="Helical" evidence="2">
    <location>
        <begin position="373"/>
        <end position="395"/>
    </location>
</feature>
<feature type="transmembrane region" description="Helical" evidence="2">
    <location>
        <begin position="400"/>
        <end position="422"/>
    </location>
</feature>
<feature type="transmembrane region" description="Helical" evidence="2">
    <location>
        <begin position="435"/>
        <end position="457"/>
    </location>
</feature>
<feature type="domain" description="Thioredoxin">
    <location>
        <begin position="464"/>
        <end position="600"/>
    </location>
</feature>
<feature type="disulfide bond" description="Redox-active" evidence="1">
    <location>
        <begin position="131"/>
        <end position="137"/>
    </location>
</feature>
<feature type="disulfide bond" description="Redox-active" evidence="1">
    <location>
        <begin position="202"/>
        <end position="322"/>
    </location>
</feature>
<feature type="disulfide bond" description="Redox-active" evidence="1">
    <location>
        <begin position="516"/>
        <end position="519"/>
    </location>
</feature>
<accession>Q8XV41</accession>
<protein>
    <recommendedName>
        <fullName>Thiol:disulfide interchange protein DsbD</fullName>
        <ecNumber>1.8.1.8</ecNumber>
    </recommendedName>
    <alternativeName>
        <fullName>Protein-disulfide reductase</fullName>
        <shortName>Disulfide reductase</shortName>
    </alternativeName>
</protein>
<gene>
    <name type="primary">dsbD</name>
    <name type="ordered locus">RSc2990</name>
    <name type="ORF">RS01128</name>
</gene>
<comment type="function">
    <text evidence="1">Required to facilitate the formation of correct disulfide bonds in some periplasmic proteins and for the assembly of the periplasmic c-type cytochromes. Acts by transferring electrons from cytoplasmic thioredoxin to the periplasm. This transfer involves a cascade of disulfide bond formation and reduction steps (By similarity).</text>
</comment>
<comment type="catalytic activity">
    <reaction>
        <text>[protein]-dithiol + NAD(+) = [protein]-disulfide + NADH + H(+)</text>
        <dbReference type="Rhea" id="RHEA:18749"/>
        <dbReference type="Rhea" id="RHEA-COMP:10593"/>
        <dbReference type="Rhea" id="RHEA-COMP:10594"/>
        <dbReference type="ChEBI" id="CHEBI:15378"/>
        <dbReference type="ChEBI" id="CHEBI:29950"/>
        <dbReference type="ChEBI" id="CHEBI:50058"/>
        <dbReference type="ChEBI" id="CHEBI:57540"/>
        <dbReference type="ChEBI" id="CHEBI:57945"/>
        <dbReference type="EC" id="1.8.1.8"/>
    </reaction>
</comment>
<comment type="catalytic activity">
    <reaction>
        <text>[protein]-dithiol + NADP(+) = [protein]-disulfide + NADPH + H(+)</text>
        <dbReference type="Rhea" id="RHEA:18753"/>
        <dbReference type="Rhea" id="RHEA-COMP:10593"/>
        <dbReference type="Rhea" id="RHEA-COMP:10594"/>
        <dbReference type="ChEBI" id="CHEBI:15378"/>
        <dbReference type="ChEBI" id="CHEBI:29950"/>
        <dbReference type="ChEBI" id="CHEBI:50058"/>
        <dbReference type="ChEBI" id="CHEBI:57783"/>
        <dbReference type="ChEBI" id="CHEBI:58349"/>
        <dbReference type="EC" id="1.8.1.8"/>
    </reaction>
</comment>
<comment type="subcellular location">
    <subcellularLocation>
        <location evidence="1">Cell inner membrane</location>
        <topology evidence="1">Multi-pass membrane protein</topology>
    </subcellularLocation>
</comment>
<comment type="similarity">
    <text evidence="3">Belongs to the thioredoxin family. DsbD subfamily.</text>
</comment>
<dbReference type="EC" id="1.8.1.8"/>
<dbReference type="EMBL" id="AL646052">
    <property type="protein sequence ID" value="CAD16699.1"/>
    <property type="molecule type" value="Genomic_DNA"/>
</dbReference>
<dbReference type="RefSeq" id="WP_011002895.1">
    <property type="nucleotide sequence ID" value="NC_003295.1"/>
</dbReference>
<dbReference type="SMR" id="Q8XV41"/>
<dbReference type="STRING" id="267608.RSc2990"/>
<dbReference type="EnsemblBacteria" id="CAD16699">
    <property type="protein sequence ID" value="CAD16699"/>
    <property type="gene ID" value="RSc2990"/>
</dbReference>
<dbReference type="KEGG" id="rso:RSc2990"/>
<dbReference type="eggNOG" id="COG4232">
    <property type="taxonomic scope" value="Bacteria"/>
</dbReference>
<dbReference type="HOGENOM" id="CLU_014657_3_0_4"/>
<dbReference type="Proteomes" id="UP000001436">
    <property type="component" value="Chromosome"/>
</dbReference>
<dbReference type="GO" id="GO:0005886">
    <property type="term" value="C:plasma membrane"/>
    <property type="evidence" value="ECO:0007669"/>
    <property type="project" value="UniProtKB-SubCell"/>
</dbReference>
<dbReference type="GO" id="GO:0009055">
    <property type="term" value="F:electron transfer activity"/>
    <property type="evidence" value="ECO:0007669"/>
    <property type="project" value="UniProtKB-UniRule"/>
</dbReference>
<dbReference type="GO" id="GO:0047134">
    <property type="term" value="F:protein-disulfide reductase [NAD(P)H] activity"/>
    <property type="evidence" value="ECO:0007669"/>
    <property type="project" value="UniProtKB-UniRule"/>
</dbReference>
<dbReference type="GO" id="GO:0045454">
    <property type="term" value="P:cell redox homeostasis"/>
    <property type="evidence" value="ECO:0007669"/>
    <property type="project" value="TreeGrafter"/>
</dbReference>
<dbReference type="GO" id="GO:0017004">
    <property type="term" value="P:cytochrome complex assembly"/>
    <property type="evidence" value="ECO:0007669"/>
    <property type="project" value="UniProtKB-UniRule"/>
</dbReference>
<dbReference type="CDD" id="cd02953">
    <property type="entry name" value="DsbDgamma"/>
    <property type="match status" value="1"/>
</dbReference>
<dbReference type="Gene3D" id="3.40.30.10">
    <property type="entry name" value="Glutaredoxin"/>
    <property type="match status" value="1"/>
</dbReference>
<dbReference type="Gene3D" id="2.60.40.1250">
    <property type="entry name" value="Thiol:disulfide interchange protein DsbD, N-terminal domain"/>
    <property type="match status" value="1"/>
</dbReference>
<dbReference type="HAMAP" id="MF_00399">
    <property type="entry name" value="DbsD"/>
    <property type="match status" value="1"/>
</dbReference>
<dbReference type="InterPro" id="IPR003834">
    <property type="entry name" value="Cyt_c_assmbl_TM_dom"/>
</dbReference>
<dbReference type="InterPro" id="IPR035671">
    <property type="entry name" value="DsbD_gamma"/>
</dbReference>
<dbReference type="InterPro" id="IPR028250">
    <property type="entry name" value="DsbDN"/>
</dbReference>
<dbReference type="InterPro" id="IPR036929">
    <property type="entry name" value="DsbDN_sf"/>
</dbReference>
<dbReference type="InterPro" id="IPR022910">
    <property type="entry name" value="Thiol_diS_interchange_DbsD"/>
</dbReference>
<dbReference type="InterPro" id="IPR036249">
    <property type="entry name" value="Thioredoxin-like_sf"/>
</dbReference>
<dbReference type="InterPro" id="IPR017937">
    <property type="entry name" value="Thioredoxin_CS"/>
</dbReference>
<dbReference type="InterPro" id="IPR013766">
    <property type="entry name" value="Thioredoxin_domain"/>
</dbReference>
<dbReference type="NCBIfam" id="NF001419">
    <property type="entry name" value="PRK00293.1"/>
    <property type="match status" value="1"/>
</dbReference>
<dbReference type="PANTHER" id="PTHR32234">
    <property type="entry name" value="THIOL:DISULFIDE INTERCHANGE PROTEIN DSBD"/>
    <property type="match status" value="1"/>
</dbReference>
<dbReference type="PANTHER" id="PTHR32234:SF0">
    <property type="entry name" value="THIOL:DISULFIDE INTERCHANGE PROTEIN DSBD"/>
    <property type="match status" value="1"/>
</dbReference>
<dbReference type="Pfam" id="PF11412">
    <property type="entry name" value="DsbD_N"/>
    <property type="match status" value="1"/>
</dbReference>
<dbReference type="Pfam" id="PF02683">
    <property type="entry name" value="DsbD_TM"/>
    <property type="match status" value="1"/>
</dbReference>
<dbReference type="Pfam" id="PF13899">
    <property type="entry name" value="Thioredoxin_7"/>
    <property type="match status" value="1"/>
</dbReference>
<dbReference type="SUPFAM" id="SSF74863">
    <property type="entry name" value="Thiol:disulfide interchange protein DsbD, N-terminal domain (DsbD-alpha)"/>
    <property type="match status" value="1"/>
</dbReference>
<dbReference type="SUPFAM" id="SSF52833">
    <property type="entry name" value="Thioredoxin-like"/>
    <property type="match status" value="1"/>
</dbReference>
<dbReference type="PROSITE" id="PS00194">
    <property type="entry name" value="THIOREDOXIN_1"/>
    <property type="match status" value="1"/>
</dbReference>
<dbReference type="PROSITE" id="PS51352">
    <property type="entry name" value="THIOREDOXIN_2"/>
    <property type="match status" value="1"/>
</dbReference>
<reference key="1">
    <citation type="journal article" date="2002" name="Nature">
        <title>Genome sequence of the plant pathogen Ralstonia solanacearum.</title>
        <authorList>
            <person name="Salanoubat M."/>
            <person name="Genin S."/>
            <person name="Artiguenave F."/>
            <person name="Gouzy J."/>
            <person name="Mangenot S."/>
            <person name="Arlat M."/>
            <person name="Billault A."/>
            <person name="Brottier P."/>
            <person name="Camus J.-C."/>
            <person name="Cattolico L."/>
            <person name="Chandler M."/>
            <person name="Choisne N."/>
            <person name="Claudel-Renard C."/>
            <person name="Cunnac S."/>
            <person name="Demange N."/>
            <person name="Gaspin C."/>
            <person name="Lavie M."/>
            <person name="Moisan A."/>
            <person name="Robert C."/>
            <person name="Saurin W."/>
            <person name="Schiex T."/>
            <person name="Siguier P."/>
            <person name="Thebault P."/>
            <person name="Whalen M."/>
            <person name="Wincker P."/>
            <person name="Levy M."/>
            <person name="Weissenbach J."/>
            <person name="Boucher C.A."/>
        </authorList>
    </citation>
    <scope>NUCLEOTIDE SEQUENCE [LARGE SCALE GENOMIC DNA]</scope>
    <source>
        <strain>ATCC BAA-1114 / GMI1000</strain>
    </source>
</reference>
<proteinExistence type="inferred from homology"/>
<evidence type="ECO:0000250" key="1"/>
<evidence type="ECO:0000255" key="2"/>
<evidence type="ECO:0000305" key="3"/>
<keyword id="KW-0997">Cell inner membrane</keyword>
<keyword id="KW-1003">Cell membrane</keyword>
<keyword id="KW-0201">Cytochrome c-type biogenesis</keyword>
<keyword id="KW-1015">Disulfide bond</keyword>
<keyword id="KW-0249">Electron transport</keyword>
<keyword id="KW-0472">Membrane</keyword>
<keyword id="KW-0520">NAD</keyword>
<keyword id="KW-0560">Oxidoreductase</keyword>
<keyword id="KW-0676">Redox-active center</keyword>
<keyword id="KW-1185">Reference proteome</keyword>
<keyword id="KW-0732">Signal</keyword>
<keyword id="KW-0812">Transmembrane</keyword>
<keyword id="KW-1133">Transmembrane helix</keyword>
<keyword id="KW-0813">Transport</keyword>
<organism>
    <name type="scientific">Ralstonia nicotianae (strain ATCC BAA-1114 / GMI1000)</name>
    <name type="common">Ralstonia solanacearum</name>
    <dbReference type="NCBI Taxonomy" id="267608"/>
    <lineage>
        <taxon>Bacteria</taxon>
        <taxon>Pseudomonadati</taxon>
        <taxon>Pseudomonadota</taxon>
        <taxon>Betaproteobacteria</taxon>
        <taxon>Burkholderiales</taxon>
        <taxon>Burkholderiaceae</taxon>
        <taxon>Ralstonia</taxon>
        <taxon>Ralstonia solanacearum species complex</taxon>
    </lineage>
</organism>
<sequence>MTLSAFLPLRRLLQLGLLLVAMATLALPARAADDFLPPEQAFRFSAVQIDGQTVEVKFAIADGYYMYRERLAVAADPATVTFAPLELPPGKVKFDDTFNKDVETYRHALVFRVKAREAASPFSLIVTSQGCADQGVCYPPMKSRFRVEPAAASPAPPAAPLEAAGSSDALGGRIASTLGGGNLGAIAVLFLGLGLLLTFTPCVLPMLPILSAIVVGEHATRMRAAAVSVAYVLGMAVVYTAVGVAAGLAGQGLQAALQNAWVLGAFAALMVVLSLAMFGLYELQLPAAWRHRLTQASNRLSGGQVAGAAVMGALSALIVSPCVTPALAGALAYIAQTGNAMVGGAALFSMSIGMGVPLVLVGVGAGNLLPRAGYWLVVTKAIFGFILLGVALWIVQPVLPAWLAMVAWAVLLIAAAVFLRTFDSLPADAGPLPRLGKVVGVVLALAGAVQLVGVAAGGRDPLQPLAGVMRASAGAQPDARGVVFQRVKSVSEVDEAVRAATATGRPVMLDFYADWCVSCKEMERLTFTDARVRAALADVVLLQADVTADGADDRALLKRFSLFGPPATIFFDAQGNQAPVRVVGFERAETFLASLRRALGTAQAKPST</sequence>